<gene>
    <name evidence="18" type="primary">goa-1</name>
    <name evidence="18" type="ORF">C26C6.2</name>
</gene>
<sequence>MGCTMSQEERAALERSRMIEKNLKEDGMQAAKDIKLLLLGAGESGKSTIVKQMKIIHESGFTAEDYKQYKPVVYSNTVQSLVAILRAMSNLGVSFGSADREVDAKLVMDVVARMEDTEPFSEELLSSMKRLWGDAGVQDCFSRSNEYQLNDSAKYFLDDLERLGEAIYQPTEQDILRTRVKTTGIVEVHFTFKNLNFKLFDVGGQRSERKKWIHCFEDVTAIIFCVAMSEYDQVLHEDETTNRMHESLKLFDSICNNKWFTDTSIILFLNKKDLFEEKIKKSPLTICFPEYSGRQDYHEASAYIQAQFEAKNKSANKEIYCHMTCATDTTNIQFVFDAVTDVIIANNLRGCGLY</sequence>
<protein>
    <recommendedName>
        <fullName>Guanine nucleotide-binding protein G(o) subunit alpha</fullName>
    </recommendedName>
</protein>
<organism>
    <name type="scientific">Caenorhabditis elegans</name>
    <dbReference type="NCBI Taxonomy" id="6239"/>
    <lineage>
        <taxon>Eukaryota</taxon>
        <taxon>Metazoa</taxon>
        <taxon>Ecdysozoa</taxon>
        <taxon>Nematoda</taxon>
        <taxon>Chromadorea</taxon>
        <taxon>Rhabditida</taxon>
        <taxon>Rhabditina</taxon>
        <taxon>Rhabditomorpha</taxon>
        <taxon>Rhabditoidea</taxon>
        <taxon>Rhabditidae</taxon>
        <taxon>Peloderinae</taxon>
        <taxon>Caenorhabditis</taxon>
    </lineage>
</organism>
<proteinExistence type="evidence at protein level"/>
<keyword id="KW-0131">Cell cycle</keyword>
<keyword id="KW-0132">Cell division</keyword>
<keyword id="KW-0145">Chemotaxis</keyword>
<keyword id="KW-0342">GTP-binding</keyword>
<keyword id="KW-0449">Lipoprotein</keyword>
<keyword id="KW-0460">Magnesium</keyword>
<keyword id="KW-0479">Metal-binding</keyword>
<keyword id="KW-0498">Mitosis</keyword>
<keyword id="KW-0519">Myristate</keyword>
<keyword id="KW-0547">Nucleotide-binding</keyword>
<keyword id="KW-0564">Palmitate</keyword>
<keyword id="KW-1185">Reference proteome</keyword>
<keyword id="KW-0716">Sensory transduction</keyword>
<keyword id="KW-0807">Transducer</keyword>
<evidence type="ECO:0000250" key="1"/>
<evidence type="ECO:0000250" key="2">
    <source>
        <dbReference type="UniProtKB" id="P63212"/>
    </source>
</evidence>
<evidence type="ECO:0000255" key="3"/>
<evidence type="ECO:0000255" key="4">
    <source>
        <dbReference type="PROSITE-ProRule" id="PRU01230"/>
    </source>
</evidence>
<evidence type="ECO:0000269" key="5">
    <source>
    </source>
</evidence>
<evidence type="ECO:0000269" key="6">
    <source>
    </source>
</evidence>
<evidence type="ECO:0000269" key="7">
    <source>
    </source>
</evidence>
<evidence type="ECO:0000269" key="8">
    <source>
    </source>
</evidence>
<evidence type="ECO:0000269" key="9">
    <source>
    </source>
</evidence>
<evidence type="ECO:0000269" key="10">
    <source>
    </source>
</evidence>
<evidence type="ECO:0000269" key="11">
    <source>
    </source>
</evidence>
<evidence type="ECO:0000269" key="12">
    <source>
    </source>
</evidence>
<evidence type="ECO:0000269" key="13">
    <source>
    </source>
</evidence>
<evidence type="ECO:0000269" key="14">
    <source>
    </source>
</evidence>
<evidence type="ECO:0000269" key="15">
    <source>
    </source>
</evidence>
<evidence type="ECO:0000269" key="16">
    <source>
    </source>
</evidence>
<evidence type="ECO:0000305" key="17"/>
<evidence type="ECO:0000312" key="18">
    <source>
        <dbReference type="WormBase" id="C26C6.2"/>
    </source>
</evidence>
<accession>P51875</accession>
<accession>Q18205</accession>
<comment type="function">
    <text evidence="5 6 7 8 9 10 11 12 14 15 16">Guanine nucleotide-binding proteins (G proteins) are involved as modulators or transducers in various transmembrane signaling systems. In the 1-cell embryo, probably together with gpa-16, controls nuclear rotation and spindle elongation during mitosis (PubMed:14534135). During the first embryonic cell divisions, plays a role in gpr-1/2 cortical localization and in the proper orientation of EMS blastomere mitotic spindle (PubMed:14534135). Polarity determinants (par genes) may regulate lin-5/gpr-1/gpr-2/goa-1 locally to create the asymmetric forces that drive spindle movement (PubMed:12730122). Involved in chemosensory responses to attractive and repellent odors detected by AWC and AWB sensory neurons, respectively (PubMed:23954825). In ASER neurons, acts downstream of glr-3 to regulate cold avoidance behavior via calcium signaling, and it may also play a role in sensing cold in the intestine (PubMed:31474366). Negatively regulates axon regeneration after injury downstream of the inhibitory compound arachidonoyl ethanolamide (AEA) by antagonizing the activation of the JNK pathway (mlk-1/mek-1/kgb-1) (PubMed:23072806). In neurons, may negatively regulate diacylglycerol (DAG) production mediated by egl-30 signaling cascade and thereby negatively regulates acetylcholine release (PubMed:22897658). Couples to the muscarinic acetylcholine receptor gar-2 to negatively regulate cholinergic receptor activity in the presence of high levels of acetylcholine in ventral cord motor neurons (PubMed:18614679). Plays a role in the navigational capacity of sperm and the targeting of sperm derived from males to the fertilization site in the uterus of hermaphrodites (PubMed:28662030). Involved in egg-laying and in regulating dopamine-mediated locomotion (PubMed:15378064, PubMed:8548815). Most likely couples to the dopamine receptors dop-2 and dop-3 to positively regulate the dopamine-mediated suppression of crh-1/CREB1 transcription factor activation in cholinergic SIA neurons in the presence of food (PubMed:19609300).</text>
</comment>
<comment type="subunit">
    <text evidence="2 5 13">G proteins are composed of 3 units; alpha, beta and gamma. The alpha chain contains the guanine nucleotide binding site (By similarity). Interacts (in GDP-bound form) with gpr-1; gpr-1 forms a complex with gpr-2 and lin-5 (PubMed:12730122). Interacts (in GDP-bound form) with gpb-1 (PubMed:12730122). Interacts (in GDP-bound form) with gbas-1 (via GBA motif); the interaction leads to activation of goa-1 (PubMed:26659249).</text>
</comment>
<comment type="interaction">
    <interactant intactId="EBI-316062">
        <id>P51875</id>
    </interactant>
    <interactant intactId="EBI-2913838">
        <id>Q19955</id>
        <label>ags-3</label>
    </interactant>
    <organismsDiffer>false</organismsDiffer>
    <experiments>7</experiments>
</comment>
<comment type="interaction">
    <interactant intactId="EBI-316062">
        <id>P51875</id>
    </interactant>
    <interactant intactId="EBI-6094450">
        <id>Q9TZI4</id>
        <label>gbas-1</label>
    </interactant>
    <organismsDiffer>false</organismsDiffer>
    <experiments>3</experiments>
</comment>
<comment type="interaction">
    <interactant intactId="EBI-316062">
        <id>P51875</id>
    </interactant>
    <interactant intactId="EBI-322214">
        <id>P34427</id>
        <label>lin-36</label>
    </interactant>
    <organismsDiffer>false</organismsDiffer>
    <experiments>3</experiments>
</comment>
<comment type="interaction">
    <interactant intactId="EBI-316062">
        <id>P51875</id>
    </interactant>
    <interactant intactId="EBI-1004494">
        <id>Q9GSX9-1</id>
        <label>ric-8</label>
    </interactant>
    <organismsDiffer>false</organismsDiffer>
    <experiments>9</experiments>
</comment>
<comment type="interaction">
    <interactant intactId="EBI-316062">
        <id>P51875</id>
    </interactant>
    <interactant intactId="EBI-6094513">
        <id>Q86RS9</id>
    </interactant>
    <organismsDiffer>false</organismsDiffer>
    <experiments>4</experiments>
</comment>
<comment type="tissue specificity">
    <text evidence="15">Expressed in the ASER neuron and the intestine.</text>
</comment>
<comment type="disruption phenotype">
    <text evidence="6 8 10 12 16">Prolonged exposure to attractive odorant benzaldehyde results in a loss of adaptive response characterized by a decrease in odor seeking behavior and in a loss of egl-4 nuclear translocation. Loss of chemotaxis response to the repellent odor 2-nonanone (PubMed:23954825). Increased egg laying; eggs are prematurely laid at one-cell to 8-cell stage (PubMed:8548815). Increased locomotion (PubMed:8548815). Increases diacylglycerol (DAG) levels along axons. Increases paralysis following treatment with acetylcholinesterase inhibitor aldicarb which is partially reduced in a drn-1 mutant background (PubMed:22897658). In a mutant background which expresses gar-2 in all cholinergic motor neurons, eliminates the resistance to Aldicarb that is characteristic of the gar-2 single mutant (PubMed:18614679). Simultaneous RNAi-mediated knockdown of both goa-1 and gpa-16 causes, in the one-cell embryo, a lack of nuclear rocking movements from prophase to metaphase and symmetric spindle elongation without transversal oscillations of the poles during anaphase (PubMed:14534135). At the 2-cell stage embryo, nuclei are mispositioned and fail to exhibit nuclear rotation (PubMed:14534135). In addition, causes a loss of gpr-1/2 cortical localization in 2-cell and 4-cell stage embryos (PubMed:14534135).</text>
</comment>
<comment type="similarity">
    <text evidence="17">Belongs to the G-alpha family. G(i/o/t/z) subfamily.</text>
</comment>
<reference key="1">
    <citation type="journal article" date="1991" name="Cell Regul.">
        <title>Homologous and unique G protein alpha subunits in the nematode Caenorhabditis elegans.</title>
        <authorList>
            <person name="Lochrie M.A."/>
            <person name="Mendel J.E."/>
            <person name="Sternberg P.W."/>
            <person name="Simon M.I."/>
        </authorList>
    </citation>
    <scope>NUCLEOTIDE SEQUENCE [MRNA]</scope>
    <source>
        <strain>Bristol N2</strain>
    </source>
</reference>
<reference key="2">
    <citation type="submission" date="2000-09" db="EMBL/GenBank/DDBJ databases">
        <title>Interaction analysis of the complete G-alpha subfamily of heterotrimeric G proteins from Caenorhabditis elegans.</title>
        <authorList>
            <person name="Cuppen E."/>
            <person name="Jansen G."/>
            <person name="Plasterk R.H.A."/>
        </authorList>
    </citation>
    <scope>NUCLEOTIDE SEQUENCE [MRNA]</scope>
    <source>
        <strain>Bristol N2</strain>
    </source>
</reference>
<reference key="3">
    <citation type="journal article" date="1998" name="Science">
        <title>Genome sequence of the nematode C. elegans: a platform for investigating biology.</title>
        <authorList>
            <consortium name="The C. elegans sequencing consortium"/>
        </authorList>
    </citation>
    <scope>NUCLEOTIDE SEQUENCE [LARGE SCALE GENOMIC DNA]</scope>
    <source>
        <strain>Bristol N2</strain>
    </source>
</reference>
<reference key="4">
    <citation type="journal article" date="1996" name="Cell">
        <title>EGL-10 regulates G protein signaling in the C. elegans nervous system and shares a conserved domain with many mammalian proteins.</title>
        <authorList>
            <person name="Koelle M.R."/>
            <person name="Horvitz H.R."/>
        </authorList>
    </citation>
    <scope>FUNCTION</scope>
    <scope>DISRUPTION PHENOTYPE</scope>
    <source>
        <strain>Bristol N2</strain>
    </source>
</reference>
<reference key="5">
    <citation type="journal article" date="2003" name="Development">
        <title>LET-99 opposes Galpha/GPR signaling to generate asymmetry for spindle positioning in response to PAR and MES-1/SRC-1 signaling.</title>
        <authorList>
            <person name="Tsou M.-F.B."/>
            <person name="Hayashi A."/>
            <person name="Rose L.S."/>
        </authorList>
    </citation>
    <scope>FUNCTION</scope>
    <scope>DISRUPTION PHENOTYPE</scope>
</reference>
<reference key="6">
    <citation type="journal article" date="2003" name="Genes Dev.">
        <title>A complex of LIN-5 and GPR proteins regulates G protein signaling and spindle function in C elegans.</title>
        <authorList>
            <person name="Srinivasan D.G."/>
            <person name="Fisk R.M."/>
            <person name="Xu H."/>
            <person name="van den Heuvel S."/>
        </authorList>
    </citation>
    <scope>FUNCTION</scope>
    <scope>INTERACTION WITH GPR-1 AND GPB-1</scope>
</reference>
<reference key="7">
    <citation type="journal article" date="2004" name="Nat. Neurosci.">
        <title>Mechanism of extrasynaptic dopamine signaling in Caenorhabditis elegans.</title>
        <authorList>
            <person name="Chase D.L."/>
            <person name="Pepper J.S."/>
            <person name="Koelle M.R."/>
        </authorList>
    </citation>
    <scope>FUNCTION</scope>
    <scope>MUTAGENESIS OF 52-GLN--TYR-354</scope>
</reference>
<reference key="8">
    <citation type="journal article" date="2008" name="J. Neurosci.">
        <title>Behavioral impact of neurotransmitter-activated G-protein-coupled receptors: muscarinic and GABAB receptors regulate Caenorhabditis elegans locomotion.</title>
        <authorList>
            <person name="Dittman J.S."/>
            <person name="Kaplan J.M."/>
        </authorList>
    </citation>
    <scope>FUNCTION</scope>
    <scope>DISRUPTION PHENOTYPE</scope>
</reference>
<reference key="9">
    <citation type="journal article" date="2009" name="EMBO J.">
        <title>Dopamine counteracts octopamine signalling in a neural circuit mediating food response in C. elegans.</title>
        <authorList>
            <person name="Suo S."/>
            <person name="Culotti J.G."/>
            <person name="Van Tol H.H."/>
        </authorList>
    </citation>
    <scope>FUNCTION</scope>
    <scope>MUTAGENESIS OF 52-GLN--TYR-354</scope>
</reference>
<reference key="10">
    <citation type="journal article" date="2012" name="Genes Cells">
        <title>Neuronally expressed Ras-family GTPase Di-Ras modulates synaptic activity in Caenorhabditis elegans.</title>
        <authorList>
            <person name="Tada M."/>
            <person name="Gengyo-Ando K."/>
            <person name="Kobayashi T."/>
            <person name="Fukuyama M."/>
            <person name="Mitani S."/>
            <person name="Kontani K."/>
            <person name="Katada T."/>
        </authorList>
    </citation>
    <scope>FUNCTION</scope>
    <scope>DISRUPTION PHENOTYPE</scope>
</reference>
<reference key="11">
    <citation type="journal article" date="2012" name="Nat. Commun.">
        <title>Endocannabinoid-Goalpha signalling inhibits axon regeneration in Caenorhabditis elegans by antagonizing Gqalpha-PKC-JNK signalling.</title>
        <authorList>
            <person name="Pastuhov S.I."/>
            <person name="Fujiki K."/>
            <person name="Nix P."/>
            <person name="Kanao S."/>
            <person name="Bastiani M."/>
            <person name="Matsumoto K."/>
            <person name="Hisamoto N."/>
        </authorList>
    </citation>
    <scope>FUNCTION</scope>
    <scope>MUTAGENESIS OF GLN-205</scope>
</reference>
<reference key="12">
    <citation type="journal article" date="2013" name="Neurosci. Lett.">
        <title>Nuclear PKG localization is regulated by G(0) alpha and is necessary in the AWB neurons to mediate avoidance in Caenorhabditis elegans.</title>
        <authorList>
            <person name="He C."/>
            <person name="O'Halloran D.M."/>
        </authorList>
    </citation>
    <scope>FUNCTION</scope>
    <scope>DISRUPTION PHENOTYPE</scope>
</reference>
<reference key="13">
    <citation type="journal article" date="2016" name="Mol. Biol. Evol.">
        <title>Evolutionary conservation of a GPCR-independent mechanism of trimeric G protein activation.</title>
        <authorList>
            <person name="Coleman B.D."/>
            <person name="Marivin A."/>
            <person name="Parag-Sharma K."/>
            <person name="DiGiacomo V."/>
            <person name="Kim S."/>
            <person name="Pepper J.S."/>
            <person name="Casler J."/>
            <person name="Nguyen L.T."/>
            <person name="Koelle M.R."/>
            <person name="Garcia-Marcos M."/>
        </authorList>
    </citation>
    <scope>INTERACTION WITH GBAS-1</scope>
    <scope>MUTAGENESIS OF TRP-212 AND PHE-216</scope>
</reference>
<reference key="14">
    <citation type="journal article" date="2017" name="PLoS Biol.">
        <title>Chemosensory and hyperoxia circuits in C. elegans males influence sperm navigational capacity.</title>
        <authorList>
            <person name="Hoang H.D."/>
            <person name="Miller M.A."/>
        </authorList>
    </citation>
    <scope>FUNCTION</scope>
    <scope>MUTAGENESIS OF 52-GLN--TYR-354</scope>
</reference>
<reference key="15">
    <citation type="journal article" date="2019" name="Cell">
        <title>A Cold-Sensing Receptor Encoded by a Glutamate Receptor Gene.</title>
        <authorList>
            <person name="Gong J."/>
            <person name="Liu J."/>
            <person name="Ronan E.A."/>
            <person name="He F."/>
            <person name="Cai W."/>
            <person name="Fatima M."/>
            <person name="Zhang W."/>
            <person name="Lee H."/>
            <person name="Li Z."/>
            <person name="Kim G.H."/>
            <person name="Pipe K.P."/>
            <person name="Duan B."/>
            <person name="Liu J."/>
            <person name="Xu X.Z.S."/>
        </authorList>
    </citation>
    <scope>FUNCTION</scope>
    <scope>TISSUE SPECIFICITY</scope>
</reference>
<name>GNAO_CAEEL</name>
<dbReference type="EMBL" id="M38251">
    <property type="protein sequence ID" value="AAA28059.1"/>
    <property type="molecule type" value="mRNA"/>
</dbReference>
<dbReference type="EMBL" id="AY008140">
    <property type="protein sequence ID" value="AAG32093.1"/>
    <property type="molecule type" value="mRNA"/>
</dbReference>
<dbReference type="EMBL" id="BX284601">
    <property type="protein sequence ID" value="CAA96595.1"/>
    <property type="molecule type" value="Genomic_DNA"/>
</dbReference>
<dbReference type="PIR" id="T19476">
    <property type="entry name" value="T19476"/>
</dbReference>
<dbReference type="RefSeq" id="NP_492108.1">
    <property type="nucleotide sequence ID" value="NM_059707.6"/>
</dbReference>
<dbReference type="SMR" id="P51875"/>
<dbReference type="BioGRID" id="37947">
    <property type="interactions" value="35"/>
</dbReference>
<dbReference type="DIP" id="DIP-25342N"/>
<dbReference type="FunCoup" id="P51875">
    <property type="interactions" value="1445"/>
</dbReference>
<dbReference type="IntAct" id="P51875">
    <property type="interactions" value="11"/>
</dbReference>
<dbReference type="STRING" id="6239.C26C6.2.1"/>
<dbReference type="PaxDb" id="6239-C26C6.2"/>
<dbReference type="PeptideAtlas" id="P51875"/>
<dbReference type="EnsemblMetazoa" id="C26C6.2.1">
    <property type="protein sequence ID" value="C26C6.2.1"/>
    <property type="gene ID" value="WBGene00001648"/>
</dbReference>
<dbReference type="GeneID" id="172505"/>
<dbReference type="KEGG" id="cel:CELE_C26C6.2"/>
<dbReference type="UCSC" id="C26C6.2">
    <property type="organism name" value="c. elegans"/>
</dbReference>
<dbReference type="AGR" id="WB:WBGene00001648"/>
<dbReference type="CTD" id="172505"/>
<dbReference type="WormBase" id="C26C6.2">
    <property type="protein sequence ID" value="CE05311"/>
    <property type="gene ID" value="WBGene00001648"/>
    <property type="gene designation" value="goa-1"/>
</dbReference>
<dbReference type="eggNOG" id="KOG0082">
    <property type="taxonomic scope" value="Eukaryota"/>
</dbReference>
<dbReference type="GeneTree" id="ENSGT00940000155883"/>
<dbReference type="HOGENOM" id="CLU_014184_6_0_1"/>
<dbReference type="InParanoid" id="P51875"/>
<dbReference type="OMA" id="GKKDYMP"/>
<dbReference type="OrthoDB" id="5817230at2759"/>
<dbReference type="PhylomeDB" id="P51875"/>
<dbReference type="Reactome" id="R-CEL-4086398">
    <property type="pathway name" value="Ca2+ pathway"/>
</dbReference>
<dbReference type="PRO" id="PR:P51875"/>
<dbReference type="Proteomes" id="UP000001940">
    <property type="component" value="Chromosome I"/>
</dbReference>
<dbReference type="Bgee" id="WBGene00001648">
    <property type="expression patterns" value="Expressed in pharyngeal muscle cell (C elegans) and 4 other cell types or tissues"/>
</dbReference>
<dbReference type="GO" id="GO:0005938">
    <property type="term" value="C:cell cortex"/>
    <property type="evidence" value="ECO:0000314"/>
    <property type="project" value="WormBase"/>
</dbReference>
<dbReference type="GO" id="GO:0005737">
    <property type="term" value="C:cytoplasm"/>
    <property type="evidence" value="ECO:0000318"/>
    <property type="project" value="GO_Central"/>
</dbReference>
<dbReference type="GO" id="GO:0005834">
    <property type="term" value="C:heterotrimeric G-protein complex"/>
    <property type="evidence" value="ECO:0000318"/>
    <property type="project" value="GO_Central"/>
</dbReference>
<dbReference type="GO" id="GO:0045202">
    <property type="term" value="C:synapse"/>
    <property type="evidence" value="ECO:0007669"/>
    <property type="project" value="GOC"/>
</dbReference>
<dbReference type="GO" id="GO:0003925">
    <property type="term" value="F:G protein activity"/>
    <property type="evidence" value="ECO:0000314"/>
    <property type="project" value="WormBase"/>
</dbReference>
<dbReference type="GO" id="GO:0016907">
    <property type="term" value="F:G protein-coupled acetylcholine receptor activity"/>
    <property type="evidence" value="ECO:0000315"/>
    <property type="project" value="UniProtKB"/>
</dbReference>
<dbReference type="GO" id="GO:0001664">
    <property type="term" value="F:G protein-coupled receptor binding"/>
    <property type="evidence" value="ECO:0000318"/>
    <property type="project" value="GO_Central"/>
</dbReference>
<dbReference type="GO" id="GO:0031683">
    <property type="term" value="F:G-protein beta/gamma-subunit complex binding"/>
    <property type="evidence" value="ECO:0000318"/>
    <property type="project" value="GO_Central"/>
</dbReference>
<dbReference type="GO" id="GO:0005525">
    <property type="term" value="F:GTP binding"/>
    <property type="evidence" value="ECO:0000314"/>
    <property type="project" value="WormBase"/>
</dbReference>
<dbReference type="GO" id="GO:0003924">
    <property type="term" value="F:GTPase activity"/>
    <property type="evidence" value="ECO:0000314"/>
    <property type="project" value="WormBase"/>
</dbReference>
<dbReference type="GO" id="GO:0046872">
    <property type="term" value="F:metal ion binding"/>
    <property type="evidence" value="ECO:0007669"/>
    <property type="project" value="UniProtKB-KW"/>
</dbReference>
<dbReference type="GO" id="GO:0019901">
    <property type="term" value="F:protein kinase binding"/>
    <property type="evidence" value="ECO:0000353"/>
    <property type="project" value="WormBase"/>
</dbReference>
<dbReference type="GO" id="GO:0043495">
    <property type="term" value="F:protein-membrane adaptor activity"/>
    <property type="evidence" value="ECO:0000353"/>
    <property type="project" value="WormBase"/>
</dbReference>
<dbReference type="GO" id="GO:0007188">
    <property type="term" value="P:adenylate cyclase-modulating G protein-coupled receptor signaling pathway"/>
    <property type="evidence" value="ECO:0000318"/>
    <property type="project" value="GO_Central"/>
</dbReference>
<dbReference type="GO" id="GO:0051301">
    <property type="term" value="P:cell division"/>
    <property type="evidence" value="ECO:0007669"/>
    <property type="project" value="UniProtKB-KW"/>
</dbReference>
<dbReference type="GO" id="GO:0006935">
    <property type="term" value="P:chemotaxis"/>
    <property type="evidence" value="ECO:0007669"/>
    <property type="project" value="UniProtKB-KW"/>
</dbReference>
<dbReference type="GO" id="GO:0050829">
    <property type="term" value="P:defense response to Gram-negative bacterium"/>
    <property type="evidence" value="ECO:0000316"/>
    <property type="project" value="UniProtKB"/>
</dbReference>
<dbReference type="GO" id="GO:0120169">
    <property type="term" value="P:detection of cold stimulus involved in thermoception"/>
    <property type="evidence" value="ECO:0000315"/>
    <property type="project" value="UniProtKB"/>
</dbReference>
<dbReference type="GO" id="GO:0007212">
    <property type="term" value="P:G protein-coupled dopamine receptor signaling pathway"/>
    <property type="evidence" value="ECO:0000315"/>
    <property type="project" value="WormBase"/>
</dbReference>
<dbReference type="GO" id="GO:0007186">
    <property type="term" value="P:G protein-coupled receptor signaling pathway"/>
    <property type="evidence" value="ECO:0000314"/>
    <property type="project" value="WormBase"/>
</dbReference>
<dbReference type="GO" id="GO:0048681">
    <property type="term" value="P:negative regulation of axon regeneration"/>
    <property type="evidence" value="ECO:0000315"/>
    <property type="project" value="UniProtKB"/>
</dbReference>
<dbReference type="GO" id="GO:0032223">
    <property type="term" value="P:negative regulation of synaptic transmission, cholinergic"/>
    <property type="evidence" value="ECO:0000315"/>
    <property type="project" value="UniProtKB"/>
</dbReference>
<dbReference type="GO" id="GO:0046662">
    <property type="term" value="P:regulation of egg-laying behavior"/>
    <property type="evidence" value="ECO:0000315"/>
    <property type="project" value="WormBase"/>
</dbReference>
<dbReference type="GO" id="GO:0060259">
    <property type="term" value="P:regulation of feeding behavior"/>
    <property type="evidence" value="ECO:0000315"/>
    <property type="project" value="WormBase"/>
</dbReference>
<dbReference type="GO" id="GO:0040012">
    <property type="term" value="P:regulation of locomotion"/>
    <property type="evidence" value="ECO:0000315"/>
    <property type="project" value="WormBase"/>
</dbReference>
<dbReference type="GO" id="GO:0043051">
    <property type="term" value="P:regulation of nematode pharyngeal pumping"/>
    <property type="evidence" value="ECO:0000316"/>
    <property type="project" value="WormBase"/>
</dbReference>
<dbReference type="GO" id="GO:0032094">
    <property type="term" value="P:response to food"/>
    <property type="evidence" value="ECO:0000315"/>
    <property type="project" value="WormBase"/>
</dbReference>
<dbReference type="GO" id="GO:1904014">
    <property type="term" value="P:response to serotonin"/>
    <property type="evidence" value="ECO:0000315"/>
    <property type="project" value="UniProtKB"/>
</dbReference>
<dbReference type="GO" id="GO:0009410">
    <property type="term" value="P:response to xenobiotic stimulus"/>
    <property type="evidence" value="ECO:0000315"/>
    <property type="project" value="UniProtKB"/>
</dbReference>
<dbReference type="CDD" id="cd00066">
    <property type="entry name" value="G-alpha"/>
    <property type="match status" value="1"/>
</dbReference>
<dbReference type="FunFam" id="1.10.400.10:FF:000001">
    <property type="entry name" value="Guanine nucleotide-binding protein G(I) subunit alpha"/>
    <property type="match status" value="1"/>
</dbReference>
<dbReference type="FunFam" id="3.40.50.300:FF:003559">
    <property type="entry name" value="Guanine nucleotide-binding protein G(i) subunit alpha-1"/>
    <property type="match status" value="1"/>
</dbReference>
<dbReference type="FunFam" id="3.40.50.300:FF:002307">
    <property type="entry name" value="Guanine nucleotide-binding protein G(k) subunit alpha"/>
    <property type="match status" value="1"/>
</dbReference>
<dbReference type="Gene3D" id="1.10.400.10">
    <property type="entry name" value="GI Alpha 1, domain 2-like"/>
    <property type="match status" value="1"/>
</dbReference>
<dbReference type="Gene3D" id="3.40.50.300">
    <property type="entry name" value="P-loop containing nucleotide triphosphate hydrolases"/>
    <property type="match status" value="1"/>
</dbReference>
<dbReference type="InterPro" id="IPR001408">
    <property type="entry name" value="Gprotein_alpha_I"/>
</dbReference>
<dbReference type="InterPro" id="IPR001019">
    <property type="entry name" value="Gprotein_alpha_su"/>
</dbReference>
<dbReference type="InterPro" id="IPR011025">
    <property type="entry name" value="GproteinA_insert"/>
</dbReference>
<dbReference type="InterPro" id="IPR027417">
    <property type="entry name" value="P-loop_NTPase"/>
</dbReference>
<dbReference type="PANTHER" id="PTHR10218:SF362">
    <property type="entry name" value="G PROTEIN ALPHA O SUBUNIT"/>
    <property type="match status" value="1"/>
</dbReference>
<dbReference type="PANTHER" id="PTHR10218">
    <property type="entry name" value="GTP-BINDING PROTEIN ALPHA SUBUNIT"/>
    <property type="match status" value="1"/>
</dbReference>
<dbReference type="Pfam" id="PF00503">
    <property type="entry name" value="G-alpha"/>
    <property type="match status" value="1"/>
</dbReference>
<dbReference type="PRINTS" id="PR00318">
    <property type="entry name" value="GPROTEINA"/>
</dbReference>
<dbReference type="PRINTS" id="PR00441">
    <property type="entry name" value="GPROTEINAI"/>
</dbReference>
<dbReference type="SMART" id="SM00275">
    <property type="entry name" value="G_alpha"/>
    <property type="match status" value="1"/>
</dbReference>
<dbReference type="SUPFAM" id="SSF52540">
    <property type="entry name" value="P-loop containing nucleoside triphosphate hydrolases"/>
    <property type="match status" value="1"/>
</dbReference>
<dbReference type="SUPFAM" id="SSF47895">
    <property type="entry name" value="Transducin (alpha subunit), insertion domain"/>
    <property type="match status" value="1"/>
</dbReference>
<dbReference type="PROSITE" id="PS51882">
    <property type="entry name" value="G_ALPHA"/>
    <property type="match status" value="1"/>
</dbReference>
<feature type="initiator methionine" description="Removed" evidence="1">
    <location>
        <position position="1"/>
    </location>
</feature>
<feature type="chain" id="PRO_0000203710" description="Guanine nucleotide-binding protein G(o) subunit alpha">
    <location>
        <begin position="2"/>
        <end position="354"/>
    </location>
</feature>
<feature type="domain" description="G-alpha" evidence="4">
    <location>
        <begin position="32"/>
        <end position="354"/>
    </location>
</feature>
<feature type="region of interest" description="G1 motif" evidence="4">
    <location>
        <begin position="35"/>
        <end position="48"/>
    </location>
</feature>
<feature type="region of interest" description="G2 motif" evidence="4">
    <location>
        <begin position="174"/>
        <end position="182"/>
    </location>
</feature>
<feature type="region of interest" description="G3 motif" evidence="4">
    <location>
        <begin position="197"/>
        <end position="206"/>
    </location>
</feature>
<feature type="region of interest" description="G4 motif" evidence="4">
    <location>
        <begin position="266"/>
        <end position="273"/>
    </location>
</feature>
<feature type="region of interest" description="G5 motif" evidence="4">
    <location>
        <begin position="324"/>
        <end position="329"/>
    </location>
</feature>
<feature type="binding site" evidence="1">
    <location>
        <begin position="40"/>
        <end position="47"/>
    </location>
    <ligand>
        <name>GTP</name>
        <dbReference type="ChEBI" id="CHEBI:37565"/>
    </ligand>
</feature>
<feature type="binding site" evidence="1">
    <location>
        <position position="47"/>
    </location>
    <ligand>
        <name>Mg(2+)</name>
        <dbReference type="ChEBI" id="CHEBI:18420"/>
    </ligand>
</feature>
<feature type="binding site" evidence="1">
    <location>
        <begin position="176"/>
        <end position="182"/>
    </location>
    <ligand>
        <name>GTP</name>
        <dbReference type="ChEBI" id="CHEBI:37565"/>
    </ligand>
</feature>
<feature type="binding site" evidence="1">
    <location>
        <position position="182"/>
    </location>
    <ligand>
        <name>Mg(2+)</name>
        <dbReference type="ChEBI" id="CHEBI:18420"/>
    </ligand>
</feature>
<feature type="binding site" evidence="1">
    <location>
        <begin position="201"/>
        <end position="205"/>
    </location>
    <ligand>
        <name>GTP</name>
        <dbReference type="ChEBI" id="CHEBI:37565"/>
    </ligand>
</feature>
<feature type="binding site" evidence="1">
    <location>
        <begin position="270"/>
        <end position="273"/>
    </location>
    <ligand>
        <name>GTP</name>
        <dbReference type="ChEBI" id="CHEBI:37565"/>
    </ligand>
</feature>
<feature type="binding site" evidence="1">
    <location>
        <position position="326"/>
    </location>
    <ligand>
        <name>GTP</name>
        <dbReference type="ChEBI" id="CHEBI:37565"/>
    </ligand>
</feature>
<feature type="lipid moiety-binding region" description="N-myristoyl glycine" evidence="3">
    <location>
        <position position="2"/>
    </location>
</feature>
<feature type="lipid moiety-binding region" description="S-palmitoyl cysteine" evidence="3">
    <location>
        <position position="3"/>
    </location>
</feature>
<feature type="mutagenesis site" description="In sa734; abnormal distribution of male-derived sperm in the hermaphrodite uterus following mating, with sperm accumulating at the spermathecal-uterine valve 1 hour following mating. Defective dopamine signaling, with defective locomotion and irregular activation of the crh-1/CREB1 transcription factor in cholinergic SIA neurons in the presence of food." evidence="7 9 14">
    <location>
        <begin position="52"/>
        <end position="354"/>
    </location>
</feature>
<feature type="mutagenesis site" description="Probably constitutively active. Inhibition of axon regeneration." evidence="11">
    <original>Q</original>
    <variation>L</variation>
    <location>
        <position position="205"/>
    </location>
</feature>
<feature type="mutagenesis site" description="Abolishes binding to gbas-1." evidence="13">
    <original>W</original>
    <variation>A</variation>
    <location>
        <position position="212"/>
    </location>
</feature>
<feature type="mutagenesis site" description="Abolishes binding to gbas-1." evidence="13">
    <original>F</original>
    <variation>A</variation>
    <location>
        <position position="216"/>
    </location>
</feature>
<feature type="sequence conflict" description="In Ref. 1; AAA28059." evidence="17" ref="1">
    <original>D</original>
    <variation>H</variation>
    <location>
        <position position="174"/>
    </location>
</feature>
<feature type="sequence conflict" description="In Ref. 1; AAA28059." evidence="17" ref="1">
    <original>V</original>
    <variation>L</variation>
    <location>
        <position position="234"/>
    </location>
</feature>